<name>RF3_SHIB3</name>
<dbReference type="EMBL" id="CP001063">
    <property type="protein sequence ID" value="ACD06473.1"/>
    <property type="molecule type" value="Genomic_DNA"/>
</dbReference>
<dbReference type="RefSeq" id="WP_000175943.1">
    <property type="nucleotide sequence ID" value="NC_010658.1"/>
</dbReference>
<dbReference type="SMR" id="B2TZQ6"/>
<dbReference type="STRING" id="344609.SbBS512_E4918"/>
<dbReference type="GeneID" id="75169869"/>
<dbReference type="KEGG" id="sbc:SbBS512_E4918"/>
<dbReference type="HOGENOM" id="CLU_002794_2_1_6"/>
<dbReference type="Proteomes" id="UP000001030">
    <property type="component" value="Chromosome"/>
</dbReference>
<dbReference type="GO" id="GO:0005829">
    <property type="term" value="C:cytosol"/>
    <property type="evidence" value="ECO:0007669"/>
    <property type="project" value="TreeGrafter"/>
</dbReference>
<dbReference type="GO" id="GO:0005525">
    <property type="term" value="F:GTP binding"/>
    <property type="evidence" value="ECO:0007669"/>
    <property type="project" value="UniProtKB-UniRule"/>
</dbReference>
<dbReference type="GO" id="GO:0003924">
    <property type="term" value="F:GTPase activity"/>
    <property type="evidence" value="ECO:0007669"/>
    <property type="project" value="InterPro"/>
</dbReference>
<dbReference type="GO" id="GO:0097216">
    <property type="term" value="F:guanosine tetraphosphate binding"/>
    <property type="evidence" value="ECO:0007669"/>
    <property type="project" value="UniProtKB-ARBA"/>
</dbReference>
<dbReference type="GO" id="GO:0016150">
    <property type="term" value="F:translation release factor activity, codon nonspecific"/>
    <property type="evidence" value="ECO:0007669"/>
    <property type="project" value="TreeGrafter"/>
</dbReference>
<dbReference type="GO" id="GO:0016149">
    <property type="term" value="F:translation release factor activity, codon specific"/>
    <property type="evidence" value="ECO:0007669"/>
    <property type="project" value="UniProtKB-UniRule"/>
</dbReference>
<dbReference type="GO" id="GO:0006449">
    <property type="term" value="P:regulation of translational termination"/>
    <property type="evidence" value="ECO:0007669"/>
    <property type="project" value="UniProtKB-UniRule"/>
</dbReference>
<dbReference type="CDD" id="cd04169">
    <property type="entry name" value="RF3"/>
    <property type="match status" value="1"/>
</dbReference>
<dbReference type="CDD" id="cd03689">
    <property type="entry name" value="RF3_II"/>
    <property type="match status" value="1"/>
</dbReference>
<dbReference type="CDD" id="cd16259">
    <property type="entry name" value="RF3_III"/>
    <property type="match status" value="1"/>
</dbReference>
<dbReference type="FunFam" id="2.40.30.10:FF:000040">
    <property type="entry name" value="Peptide chain release factor 3"/>
    <property type="match status" value="1"/>
</dbReference>
<dbReference type="FunFam" id="3.30.70.3280:FF:000001">
    <property type="entry name" value="Peptide chain release factor 3"/>
    <property type="match status" value="1"/>
</dbReference>
<dbReference type="FunFam" id="3.40.50.300:FF:000184">
    <property type="entry name" value="Peptide chain release factor 3"/>
    <property type="match status" value="1"/>
</dbReference>
<dbReference type="FunFam" id="3.40.50.300:FF:000253">
    <property type="entry name" value="Peptide chain release factor 3"/>
    <property type="match status" value="1"/>
</dbReference>
<dbReference type="Gene3D" id="3.40.50.300">
    <property type="entry name" value="P-loop containing nucleotide triphosphate hydrolases"/>
    <property type="match status" value="3"/>
</dbReference>
<dbReference type="Gene3D" id="3.30.70.3280">
    <property type="entry name" value="Peptide chain release factor 3, domain III"/>
    <property type="match status" value="1"/>
</dbReference>
<dbReference type="HAMAP" id="MF_00072">
    <property type="entry name" value="Rel_fac_3"/>
    <property type="match status" value="1"/>
</dbReference>
<dbReference type="InterPro" id="IPR053905">
    <property type="entry name" value="EF-G-like_DII"/>
</dbReference>
<dbReference type="InterPro" id="IPR035647">
    <property type="entry name" value="EFG_III/V"/>
</dbReference>
<dbReference type="InterPro" id="IPR031157">
    <property type="entry name" value="G_TR_CS"/>
</dbReference>
<dbReference type="InterPro" id="IPR027417">
    <property type="entry name" value="P-loop_NTPase"/>
</dbReference>
<dbReference type="InterPro" id="IPR004548">
    <property type="entry name" value="PrfC"/>
</dbReference>
<dbReference type="InterPro" id="IPR032090">
    <property type="entry name" value="RF3_C"/>
</dbReference>
<dbReference type="InterPro" id="IPR038467">
    <property type="entry name" value="RF3_dom_3_sf"/>
</dbReference>
<dbReference type="InterPro" id="IPR041732">
    <property type="entry name" value="RF3_GTP-bd"/>
</dbReference>
<dbReference type="InterPro" id="IPR005225">
    <property type="entry name" value="Small_GTP-bd"/>
</dbReference>
<dbReference type="InterPro" id="IPR000795">
    <property type="entry name" value="T_Tr_GTP-bd_dom"/>
</dbReference>
<dbReference type="InterPro" id="IPR009000">
    <property type="entry name" value="Transl_B-barrel_sf"/>
</dbReference>
<dbReference type="NCBIfam" id="TIGR00503">
    <property type="entry name" value="prfC"/>
    <property type="match status" value="1"/>
</dbReference>
<dbReference type="NCBIfam" id="NF001964">
    <property type="entry name" value="PRK00741.1"/>
    <property type="match status" value="1"/>
</dbReference>
<dbReference type="NCBIfam" id="TIGR00231">
    <property type="entry name" value="small_GTP"/>
    <property type="match status" value="1"/>
</dbReference>
<dbReference type="PANTHER" id="PTHR43556">
    <property type="entry name" value="PEPTIDE CHAIN RELEASE FACTOR RF3"/>
    <property type="match status" value="1"/>
</dbReference>
<dbReference type="PANTHER" id="PTHR43556:SF2">
    <property type="entry name" value="PEPTIDE CHAIN RELEASE FACTOR RF3"/>
    <property type="match status" value="1"/>
</dbReference>
<dbReference type="Pfam" id="PF22042">
    <property type="entry name" value="EF-G_D2"/>
    <property type="match status" value="1"/>
</dbReference>
<dbReference type="Pfam" id="PF00009">
    <property type="entry name" value="GTP_EFTU"/>
    <property type="match status" value="1"/>
</dbReference>
<dbReference type="Pfam" id="PF16658">
    <property type="entry name" value="RF3_C"/>
    <property type="match status" value="1"/>
</dbReference>
<dbReference type="PRINTS" id="PR00315">
    <property type="entry name" value="ELONGATNFCT"/>
</dbReference>
<dbReference type="SUPFAM" id="SSF54980">
    <property type="entry name" value="EF-G C-terminal domain-like"/>
    <property type="match status" value="1"/>
</dbReference>
<dbReference type="SUPFAM" id="SSF52540">
    <property type="entry name" value="P-loop containing nucleoside triphosphate hydrolases"/>
    <property type="match status" value="1"/>
</dbReference>
<dbReference type="SUPFAM" id="SSF50447">
    <property type="entry name" value="Translation proteins"/>
    <property type="match status" value="1"/>
</dbReference>
<dbReference type="PROSITE" id="PS00301">
    <property type="entry name" value="G_TR_1"/>
    <property type="match status" value="1"/>
</dbReference>
<dbReference type="PROSITE" id="PS51722">
    <property type="entry name" value="G_TR_2"/>
    <property type="match status" value="1"/>
</dbReference>
<gene>
    <name evidence="1" type="primary">prfC</name>
    <name type="ordered locus">SbBS512_E4918</name>
</gene>
<keyword id="KW-0963">Cytoplasm</keyword>
<keyword id="KW-0342">GTP-binding</keyword>
<keyword id="KW-0547">Nucleotide-binding</keyword>
<keyword id="KW-0648">Protein biosynthesis</keyword>
<keyword id="KW-1185">Reference proteome</keyword>
<organism>
    <name type="scientific">Shigella boydii serotype 18 (strain CDC 3083-94 / BS512)</name>
    <dbReference type="NCBI Taxonomy" id="344609"/>
    <lineage>
        <taxon>Bacteria</taxon>
        <taxon>Pseudomonadati</taxon>
        <taxon>Pseudomonadota</taxon>
        <taxon>Gammaproteobacteria</taxon>
        <taxon>Enterobacterales</taxon>
        <taxon>Enterobacteriaceae</taxon>
        <taxon>Shigella</taxon>
    </lineage>
</organism>
<accession>B2TZQ6</accession>
<protein>
    <recommendedName>
        <fullName evidence="1">Peptide chain release factor 3</fullName>
        <shortName evidence="1">RF-3</shortName>
    </recommendedName>
</protein>
<evidence type="ECO:0000255" key="1">
    <source>
        <dbReference type="HAMAP-Rule" id="MF_00072"/>
    </source>
</evidence>
<proteinExistence type="inferred from homology"/>
<comment type="function">
    <text evidence="1">Increases the formation of ribosomal termination complexes and stimulates activities of RF-1 and RF-2. It binds guanine nucleotides and has strong preference for UGA stop codons. It may interact directly with the ribosome. The stimulation of RF-1 and RF-2 is significantly reduced by GTP and GDP, but not by GMP.</text>
</comment>
<comment type="subcellular location">
    <subcellularLocation>
        <location evidence="1">Cytoplasm</location>
    </subcellularLocation>
</comment>
<comment type="similarity">
    <text evidence="1">Belongs to the TRAFAC class translation factor GTPase superfamily. Classic translation factor GTPase family. PrfC subfamily.</text>
</comment>
<sequence length="529" mass="59590">MTLSPYLQEVAKRRTFAIISHPDAGKTTITEKVLLFGQAIQTAGTVKGRGSNQHAKSDWMEMEKQRGISITTSVMQFPYHDCLVNLLDTPGHEDFSEDTYRTLTAVDCCLMVIDAAKGVEDRTRKLMEVTRLRDTPILTFMNKLDRDIRDPMELLDEVENELKIGCAPITWPIGCGKLFKGVYHLYKDETYLYQSGKGHTIQEVRIVKGLNNPDLDAAVGEDLAQQLRDELELVKGASNEFDKELFLAGEITPVFFGTALGNFGVDHMLDGLVEWAPAPMPRQTDTRTVEASEDKFTGFVFKIQANMDPKHRDRVAFMRVVSGKYEKGMKLRQVRTAKDVVISDALTFMAGDRSHVEEAYPGDILGLHNHGTIQIGDTFTQGEMMKFTGIPNFAPELFRRIRLKDPLKQKQLLKGLVQLSEEGAVQVFRPISNNDLIVGAVGVLQFDVVVSRLKSEYNVEAVYESVNVATARWVECADAKKFEEFKRKNESQLALDGGDNLAYIATSMVNLRLAQERYPDVQFHQTREH</sequence>
<reference key="1">
    <citation type="submission" date="2008-05" db="EMBL/GenBank/DDBJ databases">
        <title>Complete sequence of Shigella boydii serotype 18 strain BS512.</title>
        <authorList>
            <person name="Rasko D.A."/>
            <person name="Rosovitz M."/>
            <person name="Maurelli A.T."/>
            <person name="Myers G."/>
            <person name="Seshadri R."/>
            <person name="Cer R."/>
            <person name="Jiang L."/>
            <person name="Ravel J."/>
            <person name="Sebastian Y."/>
        </authorList>
    </citation>
    <scope>NUCLEOTIDE SEQUENCE [LARGE SCALE GENOMIC DNA]</scope>
    <source>
        <strain>CDC 3083-94 / BS512</strain>
    </source>
</reference>
<feature type="chain" id="PRO_1000092502" description="Peptide chain release factor 3">
    <location>
        <begin position="1"/>
        <end position="529"/>
    </location>
</feature>
<feature type="domain" description="tr-type G">
    <location>
        <begin position="11"/>
        <end position="280"/>
    </location>
</feature>
<feature type="binding site" evidence="1">
    <location>
        <begin position="20"/>
        <end position="27"/>
    </location>
    <ligand>
        <name>GTP</name>
        <dbReference type="ChEBI" id="CHEBI:37565"/>
    </ligand>
</feature>
<feature type="binding site" evidence="1">
    <location>
        <begin position="88"/>
        <end position="92"/>
    </location>
    <ligand>
        <name>GTP</name>
        <dbReference type="ChEBI" id="CHEBI:37565"/>
    </ligand>
</feature>
<feature type="binding site" evidence="1">
    <location>
        <begin position="142"/>
        <end position="145"/>
    </location>
    <ligand>
        <name>GTP</name>
        <dbReference type="ChEBI" id="CHEBI:37565"/>
    </ligand>
</feature>